<comment type="function">
    <text evidence="1">Component of the cytochrome b6-f complex, which mediates electron transfer between photosystem II (PSII) and photosystem I (PSI), cyclic electron flow around PSI, and state transitions. PetG is required for either the stability or assembly of the cytochrome b6-f complex.</text>
</comment>
<comment type="subunit">
    <text evidence="1">The 4 large subunits of the cytochrome b6-f complex are cytochrome b6, subunit IV (17 kDa polypeptide, PetD), cytochrome f and the Rieske protein, while the 4 small subunits are PetG, PetL, PetM and PetN. The complex functions as a dimer.</text>
</comment>
<comment type="subcellular location">
    <subcellularLocation>
        <location evidence="1">Plastid</location>
        <location evidence="1">Chloroplast thylakoid membrane</location>
        <topology evidence="1">Single-pass membrane protein</topology>
    </subcellularLocation>
</comment>
<comment type="similarity">
    <text evidence="1">Belongs to the PetG family.</text>
</comment>
<proteinExistence type="inferred from homology"/>
<protein>
    <recommendedName>
        <fullName evidence="1">Cytochrome b6-f complex subunit 5</fullName>
    </recommendedName>
    <alternativeName>
        <fullName evidence="1">Cytochrome b6-f complex subunit PetG</fullName>
    </alternativeName>
    <alternativeName>
        <fullName evidence="1">Cytochrome b6-f complex subunit V</fullName>
    </alternativeName>
</protein>
<reference key="1">
    <citation type="journal article" date="2006" name="BMC Genomics">
        <title>Complete plastid genome sequence of Daucus carota: implications for biotechnology and phylogeny of angiosperms.</title>
        <authorList>
            <person name="Ruhlman T."/>
            <person name="Lee S.-B."/>
            <person name="Jansen R.K."/>
            <person name="Hostetler J.B."/>
            <person name="Tallon L.J."/>
            <person name="Town C.D."/>
            <person name="Daniell H."/>
        </authorList>
    </citation>
    <scope>NUCLEOTIDE SEQUENCE [LARGE SCALE GENOMIC DNA]</scope>
    <source>
        <strain>cv. Danvers Half-long</strain>
    </source>
</reference>
<evidence type="ECO:0000255" key="1">
    <source>
        <dbReference type="HAMAP-Rule" id="MF_00432"/>
    </source>
</evidence>
<gene>
    <name evidence="1" type="primary">petG</name>
</gene>
<name>PETG_DAUCA</name>
<sequence length="37" mass="4130">MIEVFLFGIVLGLIPVTLAGLFVTAYLQYRRGDQSDL</sequence>
<keyword id="KW-0150">Chloroplast</keyword>
<keyword id="KW-0249">Electron transport</keyword>
<keyword id="KW-0472">Membrane</keyword>
<keyword id="KW-0602">Photosynthesis</keyword>
<keyword id="KW-0934">Plastid</keyword>
<keyword id="KW-0793">Thylakoid</keyword>
<keyword id="KW-0812">Transmembrane</keyword>
<keyword id="KW-1133">Transmembrane helix</keyword>
<keyword id="KW-0813">Transport</keyword>
<accession>Q0G9U3</accession>
<dbReference type="EMBL" id="DQ898156">
    <property type="protein sequence ID" value="ABI32443.1"/>
    <property type="molecule type" value="Genomic_DNA"/>
</dbReference>
<dbReference type="RefSeq" id="YP_740136.1">
    <property type="nucleotide sequence ID" value="NC_008325.1"/>
</dbReference>
<dbReference type="SMR" id="Q0G9U3"/>
<dbReference type="GeneID" id="4266762"/>
<dbReference type="GO" id="GO:0009535">
    <property type="term" value="C:chloroplast thylakoid membrane"/>
    <property type="evidence" value="ECO:0007669"/>
    <property type="project" value="UniProtKB-SubCell"/>
</dbReference>
<dbReference type="GO" id="GO:0009512">
    <property type="term" value="C:cytochrome b6f complex"/>
    <property type="evidence" value="ECO:0007669"/>
    <property type="project" value="InterPro"/>
</dbReference>
<dbReference type="GO" id="GO:0045158">
    <property type="term" value="F:electron transporter, transferring electrons within cytochrome b6/f complex of photosystem II activity"/>
    <property type="evidence" value="ECO:0007669"/>
    <property type="project" value="UniProtKB-UniRule"/>
</dbReference>
<dbReference type="GO" id="GO:0017004">
    <property type="term" value="P:cytochrome complex assembly"/>
    <property type="evidence" value="ECO:0007669"/>
    <property type="project" value="UniProtKB-UniRule"/>
</dbReference>
<dbReference type="GO" id="GO:0015979">
    <property type="term" value="P:photosynthesis"/>
    <property type="evidence" value="ECO:0007669"/>
    <property type="project" value="UniProtKB-KW"/>
</dbReference>
<dbReference type="HAMAP" id="MF_00432">
    <property type="entry name" value="Cytb6_f_PetG"/>
    <property type="match status" value="1"/>
</dbReference>
<dbReference type="InterPro" id="IPR003683">
    <property type="entry name" value="Cyt_6/f_cplx_su5"/>
</dbReference>
<dbReference type="InterPro" id="IPR036099">
    <property type="entry name" value="Cyt_6/f_cplx_su5_sf"/>
</dbReference>
<dbReference type="NCBIfam" id="NF001907">
    <property type="entry name" value="PRK00665.1"/>
    <property type="match status" value="1"/>
</dbReference>
<dbReference type="Pfam" id="PF02529">
    <property type="entry name" value="PetG"/>
    <property type="match status" value="1"/>
</dbReference>
<dbReference type="PIRSF" id="PIRSF000034">
    <property type="entry name" value="Cyt_b6-f_V"/>
    <property type="match status" value="1"/>
</dbReference>
<dbReference type="SUPFAM" id="SSF103446">
    <property type="entry name" value="PetG subunit of the cytochrome b6f complex"/>
    <property type="match status" value="1"/>
</dbReference>
<feature type="chain" id="PRO_0000275486" description="Cytochrome b6-f complex subunit 5">
    <location>
        <begin position="1"/>
        <end position="37"/>
    </location>
</feature>
<feature type="transmembrane region" description="Helical" evidence="1">
    <location>
        <begin position="5"/>
        <end position="25"/>
    </location>
</feature>
<organism>
    <name type="scientific">Daucus carota</name>
    <name type="common">Wild carrot</name>
    <dbReference type="NCBI Taxonomy" id="4039"/>
    <lineage>
        <taxon>Eukaryota</taxon>
        <taxon>Viridiplantae</taxon>
        <taxon>Streptophyta</taxon>
        <taxon>Embryophyta</taxon>
        <taxon>Tracheophyta</taxon>
        <taxon>Spermatophyta</taxon>
        <taxon>Magnoliopsida</taxon>
        <taxon>eudicotyledons</taxon>
        <taxon>Gunneridae</taxon>
        <taxon>Pentapetalae</taxon>
        <taxon>asterids</taxon>
        <taxon>campanulids</taxon>
        <taxon>Apiales</taxon>
        <taxon>Apiaceae</taxon>
        <taxon>Apioideae</taxon>
        <taxon>Scandiceae</taxon>
        <taxon>Daucinae</taxon>
        <taxon>Daucus</taxon>
        <taxon>Daucus sect. Daucus</taxon>
    </lineage>
</organism>
<geneLocation type="chloroplast"/>